<organism>
    <name type="scientific">Aspergillus awamori</name>
    <name type="common">Black koji mold</name>
    <dbReference type="NCBI Taxonomy" id="105351"/>
    <lineage>
        <taxon>Eukaryota</taxon>
        <taxon>Fungi</taxon>
        <taxon>Dikarya</taxon>
        <taxon>Ascomycota</taxon>
        <taxon>Pezizomycotina</taxon>
        <taxon>Eurotiomycetes</taxon>
        <taxon>Eurotiomycetidae</taxon>
        <taxon>Eurotiales</taxon>
        <taxon>Aspergillaceae</taxon>
        <taxon>Aspergillus</taxon>
    </lineage>
</organism>
<proteinExistence type="inferred from homology"/>
<keyword id="KW-0210">Decarboxylase</keyword>
<keyword id="KW-0456">Lyase</keyword>
<keyword id="KW-0665">Pyrimidine biosynthesis</keyword>
<dbReference type="EC" id="4.1.1.23"/>
<dbReference type="EMBL" id="AY530810">
    <property type="protein sequence ID" value="AAT00642.1"/>
    <property type="molecule type" value="Genomic_DNA"/>
</dbReference>
<dbReference type="SMR" id="Q5J2D0"/>
<dbReference type="UniPathway" id="UPA00070">
    <property type="reaction ID" value="UER00120"/>
</dbReference>
<dbReference type="GO" id="GO:0005829">
    <property type="term" value="C:cytosol"/>
    <property type="evidence" value="ECO:0007669"/>
    <property type="project" value="TreeGrafter"/>
</dbReference>
<dbReference type="GO" id="GO:0004590">
    <property type="term" value="F:orotidine-5'-phosphate decarboxylase activity"/>
    <property type="evidence" value="ECO:0007669"/>
    <property type="project" value="UniProtKB-EC"/>
</dbReference>
<dbReference type="GO" id="GO:0006207">
    <property type="term" value="P:'de novo' pyrimidine nucleobase biosynthetic process"/>
    <property type="evidence" value="ECO:0007669"/>
    <property type="project" value="InterPro"/>
</dbReference>
<dbReference type="GO" id="GO:0044205">
    <property type="term" value="P:'de novo' UMP biosynthetic process"/>
    <property type="evidence" value="ECO:0007669"/>
    <property type="project" value="UniProtKB-UniPathway"/>
</dbReference>
<dbReference type="CDD" id="cd04725">
    <property type="entry name" value="OMP_decarboxylase_like"/>
    <property type="match status" value="1"/>
</dbReference>
<dbReference type="FunFam" id="3.20.20.70:FF:000114">
    <property type="entry name" value="Decarboxylase,orotidine phosphate"/>
    <property type="match status" value="1"/>
</dbReference>
<dbReference type="Gene3D" id="3.20.20.70">
    <property type="entry name" value="Aldolase class I"/>
    <property type="match status" value="1"/>
</dbReference>
<dbReference type="InterPro" id="IPR013785">
    <property type="entry name" value="Aldolase_TIM"/>
</dbReference>
<dbReference type="InterPro" id="IPR014732">
    <property type="entry name" value="OMPdecase"/>
</dbReference>
<dbReference type="InterPro" id="IPR018089">
    <property type="entry name" value="OMPdecase_AS"/>
</dbReference>
<dbReference type="InterPro" id="IPR001754">
    <property type="entry name" value="OMPdeCOase_dom"/>
</dbReference>
<dbReference type="InterPro" id="IPR011060">
    <property type="entry name" value="RibuloseP-bd_barrel"/>
</dbReference>
<dbReference type="NCBIfam" id="TIGR01740">
    <property type="entry name" value="pyrF"/>
    <property type="match status" value="1"/>
</dbReference>
<dbReference type="PANTHER" id="PTHR32119">
    <property type="entry name" value="OROTIDINE 5'-PHOSPHATE DECARBOXYLASE"/>
    <property type="match status" value="1"/>
</dbReference>
<dbReference type="PANTHER" id="PTHR32119:SF2">
    <property type="entry name" value="OROTIDINE 5'-PHOSPHATE DECARBOXYLASE"/>
    <property type="match status" value="1"/>
</dbReference>
<dbReference type="Pfam" id="PF00215">
    <property type="entry name" value="OMPdecase"/>
    <property type="match status" value="1"/>
</dbReference>
<dbReference type="SMART" id="SM00934">
    <property type="entry name" value="OMPdecase"/>
    <property type="match status" value="1"/>
</dbReference>
<dbReference type="SUPFAM" id="SSF51366">
    <property type="entry name" value="Ribulose-phoshate binding barrel"/>
    <property type="match status" value="1"/>
</dbReference>
<dbReference type="PROSITE" id="PS00156">
    <property type="entry name" value="OMPDECASE"/>
    <property type="match status" value="1"/>
</dbReference>
<reference key="1">
    <citation type="journal article" date="2005" name="Fungal Genet. Biol.">
        <title>Agrobacterium-mediated transformation leads to improved gene replacement efficiency in Aspergillus awamori.</title>
        <authorList>
            <person name="Michielse C.B."/>
            <person name="Arentshorst M."/>
            <person name="Ram A.F."/>
            <person name="van den Hondel C.A."/>
        </authorList>
    </citation>
    <scope>NUCLEOTIDE SEQUENCE [GENOMIC DNA]</scope>
    <source>
        <strain>ATCC 11358 / K-6615 / CBS 115.52</strain>
    </source>
</reference>
<comment type="catalytic activity">
    <reaction evidence="2">
        <text>orotidine 5'-phosphate + H(+) = UMP + CO2</text>
        <dbReference type="Rhea" id="RHEA:11596"/>
        <dbReference type="ChEBI" id="CHEBI:15378"/>
        <dbReference type="ChEBI" id="CHEBI:16526"/>
        <dbReference type="ChEBI" id="CHEBI:57538"/>
        <dbReference type="ChEBI" id="CHEBI:57865"/>
        <dbReference type="EC" id="4.1.1.23"/>
    </reaction>
</comment>
<comment type="pathway">
    <text>Pyrimidine metabolism; UMP biosynthesis via de novo pathway; UMP from orotate: step 2/2.</text>
</comment>
<comment type="similarity">
    <text evidence="3">Belongs to the OMP decarboxylase family.</text>
</comment>
<evidence type="ECO:0000250" key="1"/>
<evidence type="ECO:0000255" key="2">
    <source>
        <dbReference type="PROSITE-ProRule" id="PRU10110"/>
    </source>
</evidence>
<evidence type="ECO:0000305" key="3"/>
<sequence length="277" mass="30166">MSSKSQLTYTARASKHPNALAKRLFEIAEAKKTNVTVSADVTTTKELLDLADRLGPYIAVIKTHIDILSDFSDETIEGLKALAQKHNFLIFEDRKFIDIGNTVQKQYHRGTLRISEWAHIINCSILPGEGIVEALAQTASAPDFGYGPERGLLILAEMTSKGSLATGQYTTSSVDYARKYKNFVMGFVSTRSLGEVQSEVSSPSDEEDFVVFTTGVNISSKGDKLGQQYQTPASAIGRGADFIIAGRGIYAAPDPVQAAQQYQKEGWEAYLARVGGN</sequence>
<name>PYRF_ASPAW</name>
<protein>
    <recommendedName>
        <fullName>Orotidine 5'-phosphate decarboxylase</fullName>
        <ecNumber>4.1.1.23</ecNumber>
    </recommendedName>
    <alternativeName>
        <fullName>OMP decarboxylase</fullName>
        <shortName>OMPDCase</shortName>
        <shortName>OMPdecase</shortName>
    </alternativeName>
    <alternativeName>
        <fullName>Uridine 5'-monophosphate synthase</fullName>
        <shortName>UMP synthase</shortName>
    </alternativeName>
</protein>
<gene>
    <name type="primary">pyrG</name>
</gene>
<feature type="chain" id="PRO_0000134640" description="Orotidine 5'-phosphate decarboxylase">
    <location>
        <begin position="1"/>
        <end position="277"/>
    </location>
</feature>
<feature type="active site" description="Proton donor" evidence="2">
    <location>
        <position position="95"/>
    </location>
</feature>
<feature type="binding site" evidence="1">
    <location>
        <position position="40"/>
    </location>
    <ligand>
        <name>substrate</name>
    </ligand>
</feature>
<feature type="binding site" evidence="1">
    <location>
        <begin position="62"/>
        <end position="64"/>
    </location>
    <ligand>
        <name>substrate</name>
    </ligand>
</feature>
<feature type="binding site" evidence="1">
    <location>
        <begin position="93"/>
        <end position="102"/>
    </location>
    <ligand>
        <name>substrate</name>
    </ligand>
</feature>
<feature type="binding site" evidence="1">
    <location>
        <position position="229"/>
    </location>
    <ligand>
        <name>substrate</name>
    </ligand>
</feature>
<feature type="binding site" evidence="1">
    <location>
        <position position="247"/>
    </location>
    <ligand>
        <name>substrate</name>
    </ligand>
</feature>
<accession>Q5J2D0</accession>